<gene>
    <name type="ordered locus">CCNA_03000</name>
</gene>
<sequence>MTLQPFDGFGLGLRPPHYRAFLDSERPLVDFVEVISENFMVGGGRPLHVIDAVRERYPVALHGVSMSVGSADGVKLDYLRRLKGLADRVDPMWVSDHLCWTGVEGFNSHDLLPVPYTEEAMAVVCANIALAQDVLERPLLLENPSSYVTFANDAMAEHQFLAEMCARTGCYLLLDINNIYVSASNHGFDPYEYLAAVPVDRVLQIHLAGHSQGRELLIDTHDQPVPDSVWALYEAAAGRFGPVAAMIERDDDIPPLDDLLAELDVARARWAAGRRGSLAA</sequence>
<proteinExistence type="evidence at transcript level"/>
<name>Y3000_CAUVN</name>
<comment type="induction">
    <text evidence="2">Induced by potassium chromate (K(2)Cr(2)O(7)) and cadmium chloride (CdCl(2)) (PubMed:22985357). Induction by Cr and Cd requires sigF (PubMed:22985357). Probably part of the CCNA_03001 to CCNA_02999 operon.</text>
</comment>
<comment type="disruption phenotype">
    <text evidence="2">Not essential even when cells grown in the presence of its inducers dichromate or cadmium.</text>
</comment>
<comment type="similarity">
    <text evidence="1">Belongs to the UPF0276 family.</text>
</comment>
<keyword id="KW-1185">Reference proteome</keyword>
<keyword id="KW-0346">Stress response</keyword>
<dbReference type="EMBL" id="CP001340">
    <property type="protein sequence ID" value="ACL96465.2"/>
    <property type="molecule type" value="Genomic_DNA"/>
</dbReference>
<dbReference type="RefSeq" id="WP_024265874.1">
    <property type="nucleotide sequence ID" value="NC_011916.1"/>
</dbReference>
<dbReference type="RefSeq" id="YP_002518373.2">
    <property type="nucleotide sequence ID" value="NC_011916.1"/>
</dbReference>
<dbReference type="SMR" id="A0A0H3CC29"/>
<dbReference type="GeneID" id="7333289"/>
<dbReference type="KEGG" id="ccs:CCNA_03000"/>
<dbReference type="PATRIC" id="fig|565050.3.peg.2927"/>
<dbReference type="HOGENOM" id="CLU_064263_0_0_5"/>
<dbReference type="OrthoDB" id="9763101at2"/>
<dbReference type="Proteomes" id="UP000001364">
    <property type="component" value="Chromosome"/>
</dbReference>
<dbReference type="Gene3D" id="3.20.20.150">
    <property type="entry name" value="Divalent-metal-dependent TIM barrel enzymes"/>
    <property type="match status" value="1"/>
</dbReference>
<dbReference type="HAMAP" id="MF_00697">
    <property type="entry name" value="UPF0276"/>
    <property type="match status" value="1"/>
</dbReference>
<dbReference type="InterPro" id="IPR007801">
    <property type="entry name" value="MbnB/TglH/ChrH"/>
</dbReference>
<dbReference type="InterPro" id="IPR036237">
    <property type="entry name" value="Xyl_isomerase-like_sf"/>
</dbReference>
<dbReference type="NCBIfam" id="NF003818">
    <property type="entry name" value="PRK05409.1"/>
    <property type="match status" value="1"/>
</dbReference>
<dbReference type="PANTHER" id="PTHR42194">
    <property type="entry name" value="UPF0276 PROTEIN HI_1600"/>
    <property type="match status" value="1"/>
</dbReference>
<dbReference type="PANTHER" id="PTHR42194:SF1">
    <property type="entry name" value="UPF0276 PROTEIN HI_1600"/>
    <property type="match status" value="1"/>
</dbReference>
<dbReference type="Pfam" id="PF05114">
    <property type="entry name" value="MbnB_TglH_ChrH"/>
    <property type="match status" value="1"/>
</dbReference>
<dbReference type="SUPFAM" id="SSF51658">
    <property type="entry name" value="Xylose isomerase-like"/>
    <property type="match status" value="1"/>
</dbReference>
<reference key="1">
    <citation type="journal article" date="2010" name="J. Bacteriol.">
        <title>The genetic basis of laboratory adaptation in Caulobacter crescentus.</title>
        <authorList>
            <person name="Marks M.E."/>
            <person name="Castro-Rojas C.M."/>
            <person name="Teiling C."/>
            <person name="Du L."/>
            <person name="Kapatral V."/>
            <person name="Walunas T.L."/>
            <person name="Crosson S."/>
        </authorList>
    </citation>
    <scope>NUCLEOTIDE SEQUENCE [LARGE SCALE GENOMIC DNA]</scope>
    <source>
        <strain>NA1000 / CB15N</strain>
    </source>
</reference>
<reference key="2">
    <citation type="journal article" date="2012" name="BMC Microbiol.">
        <title>Extracytoplasmic function (ECF) sigma factor sigmaF is involved in Caulobacter crescentus response to heavy metal stress.</title>
        <authorList>
            <person name="Kohler C."/>
            <person name="Lourenco R.F."/>
            <person name="Avelar G.M."/>
            <person name="Gomes S.L."/>
        </authorList>
    </citation>
    <scope>INDUCTION BY CHROMATE AND CADMIUM</scope>
    <scope>DISRUPTION PHENOTYPE</scope>
    <source>
        <strain>NA1000 / CB15N</strain>
    </source>
</reference>
<organism>
    <name type="scientific">Caulobacter vibrioides (strain NA1000 / CB15N)</name>
    <name type="common">Caulobacter crescentus</name>
    <dbReference type="NCBI Taxonomy" id="565050"/>
    <lineage>
        <taxon>Bacteria</taxon>
        <taxon>Pseudomonadati</taxon>
        <taxon>Pseudomonadota</taxon>
        <taxon>Alphaproteobacteria</taxon>
        <taxon>Caulobacterales</taxon>
        <taxon>Caulobacteraceae</taxon>
        <taxon>Caulobacter</taxon>
    </lineage>
</organism>
<accession>A0A0H3CC29</accession>
<protein>
    <recommendedName>
        <fullName evidence="1">UPF0276 protein CCNA_03000</fullName>
    </recommendedName>
</protein>
<evidence type="ECO:0000255" key="1">
    <source>
        <dbReference type="HAMAP-Rule" id="MF_00697"/>
    </source>
</evidence>
<evidence type="ECO:0000269" key="2">
    <source>
    </source>
</evidence>
<feature type="chain" id="PRO_0000440890" description="UPF0276 protein CCNA_03000">
    <location>
        <begin position="1"/>
        <end position="280"/>
    </location>
</feature>